<dbReference type="EMBL" id="S57540">
    <property type="protein sequence ID" value="AAB19783.1"/>
    <property type="status" value="ALT_FRAME"/>
    <property type="molecule type" value="Genomic_DNA"/>
</dbReference>
<dbReference type="EMBL" id="S57540">
    <property type="protein sequence ID" value="AAB19784.1"/>
    <property type="status" value="ALT_FRAME"/>
    <property type="molecule type" value="Genomic_DNA"/>
</dbReference>
<dbReference type="PIR" id="E40511">
    <property type="entry name" value="E40511"/>
</dbReference>
<dbReference type="PIR" id="F40511">
    <property type="entry name" value="F40511"/>
</dbReference>
<dbReference type="SMR" id="P30003"/>
<dbReference type="GO" id="GO:0019033">
    <property type="term" value="C:viral tegument"/>
    <property type="evidence" value="ECO:0007669"/>
    <property type="project" value="UniProtKB-SubCell"/>
</dbReference>
<dbReference type="GO" id="GO:0019068">
    <property type="term" value="P:virion assembly"/>
    <property type="evidence" value="ECO:0007669"/>
    <property type="project" value="InterPro"/>
</dbReference>
<dbReference type="InterPro" id="IPR007611">
    <property type="entry name" value="Herpes_U30"/>
</dbReference>
<dbReference type="Pfam" id="PF04523">
    <property type="entry name" value="Herpes_U30"/>
    <property type="match status" value="1"/>
</dbReference>
<name>UL37_HHV6G</name>
<organismHost>
    <name type="scientific">Homo sapiens</name>
    <name type="common">Human</name>
    <dbReference type="NCBI Taxonomy" id="9606"/>
</organismHost>
<evidence type="ECO:0000305" key="1"/>
<organism>
    <name type="scientific">Human herpesvirus 6A (strain GS)</name>
    <name type="common">HHV-6 variant A</name>
    <name type="synonym">Human B lymphotropic virus</name>
    <dbReference type="NCBI Taxonomy" id="10369"/>
    <lineage>
        <taxon>Viruses</taxon>
        <taxon>Duplodnaviria</taxon>
        <taxon>Heunggongvirae</taxon>
        <taxon>Peploviricota</taxon>
        <taxon>Herviviricetes</taxon>
        <taxon>Herpesvirales</taxon>
        <taxon>Orthoherpesviridae</taxon>
        <taxon>Betaherpesvirinae</taxon>
        <taxon>Roseolovirus</taxon>
        <taxon>Roseolovirus humanbeta6a</taxon>
        <taxon>Human betaherpesvirus 6A</taxon>
    </lineage>
</organism>
<comment type="subcellular location">
    <subcellularLocation>
        <location evidence="1">Virion tegument</location>
    </subcellularLocation>
</comment>
<comment type="similarity">
    <text evidence="1">Belongs to the herpesviridae HHV-1 UL37 family.</text>
</comment>
<comment type="sequence caution" evidence="1">
    <conflict type="frameshift">
        <sequence resource="EMBL-CDS" id="AAB19783"/>
    </conflict>
</comment>
<comment type="sequence caution" evidence="1">
    <conflict type="frameshift">
        <sequence resource="EMBL-CDS" id="AAB19784"/>
    </conflict>
</comment>
<protein>
    <recommendedName>
        <fullName>Capsid assembly protein UL37 homolog</fullName>
    </recommendedName>
</protein>
<feature type="chain" id="PRO_0000116047" description="Capsid assembly protein UL37 homolog">
    <location>
        <begin position="1" status="less than"/>
        <end position="798"/>
    </location>
</feature>
<feature type="non-terminal residue">
    <location>
        <position position="1"/>
    </location>
</feature>
<proteinExistence type="inferred from homology"/>
<sequence length="798" mass="92289">KLRAQPAANDPGTDKTIKYSKIQSIIQKINSFTHENSLLANCRAVVELIDDLYRKLYSWFLHVLTFEDIQFPGDTFLDRLLKMDYCFTYYPSSNRHLIDLFEKTLDNQTFTNLDKFFDTSGNSPELLYQKTFSLKIFSKNLTAQDNGLYIYPLLKTDLSILDFLGTENILFHRGLIYHILHQKTIPQERENDLNKINQFFATVIQQVIETKSSCLPASLSQLLDTIFHFNRIGLNMETCRTYIEILSNHMATPDTQPIINTFTINLTHIVFTAHVFFICMENFSPTFIFYNRKKLILEQQRAILIIERNDYSTLWKQISDHIDCLFNVSLSESFFKEYTKGGNEDQKQFLYKNLFEKWGNVFFPFTYSVSTSNNSTAHHITTLELRDICKEVYQSDSPDAYESLLPYSTHPSFKTLYVKIYVIPMVSHITNLTFDKLQSDCRLLTLIHACKLLLPSQHLLLHYMAWLYAFSINVDHIDLGTFTVIKSVIFKIADHINVMTHTIYSPETNLLVSILLNAYTNYLQKYVNPWIKQTITANFSLIQTYITFTKQCASILATKCNINLDNLFIYITIGTDKIVTTSFCSFIATCRNLVRQHEEFEKSLQTIQISETTLTGMLRNIITSVSSSKELLTNEALQKFIDTVQRISQHVNETYQSISMNLEKCKTSNDILIESLKKIIYIVDVLSSNAILNTSLASRCLEAANLAVSNNSFTILEIKKDAVAVFKPFITQLFESMKPTTSLHKKLMSTQKLTTDHIPFLDTFDDRYNLVRHVERQLNWYAAHAEAAQQDLITPLKF</sequence>
<gene>
    <name type="primary">U30</name>
    <name type="synonym">RF1/RF2</name>
</gene>
<accession>P30003</accession>
<accession>P30004</accession>
<reference key="1">
    <citation type="journal article" date="1991" name="J. Virol.">
        <title>Identification of the human herpesvirus 6 glycoprotein H and putative large tegument protein genes.</title>
        <authorList>
            <person name="Josephs S.F."/>
            <person name="Ablashi D.V."/>
            <person name="Salahuddin S.Z."/>
            <person name="Jagodzinski L.L."/>
            <person name="Wong-Staal F."/>
            <person name="Gallo R.C."/>
        </authorList>
    </citation>
    <scope>NUCLEOTIDE SEQUENCE [GENOMIC DNA]</scope>
</reference>
<keyword id="KW-0946">Virion</keyword>
<keyword id="KW-0920">Virion tegument</keyword>